<proteinExistence type="inferred from homology"/>
<organism>
    <name type="scientific">Staphylococcus aureus (strain Mu50 / ATCC 700699)</name>
    <dbReference type="NCBI Taxonomy" id="158878"/>
    <lineage>
        <taxon>Bacteria</taxon>
        <taxon>Bacillati</taxon>
        <taxon>Bacillota</taxon>
        <taxon>Bacilli</taxon>
        <taxon>Bacillales</taxon>
        <taxon>Staphylococcaceae</taxon>
        <taxon>Staphylococcus</taxon>
    </lineage>
</organism>
<reference key="1">
    <citation type="journal article" date="2001" name="Lancet">
        <title>Whole genome sequencing of meticillin-resistant Staphylococcus aureus.</title>
        <authorList>
            <person name="Kuroda M."/>
            <person name="Ohta T."/>
            <person name="Uchiyama I."/>
            <person name="Baba T."/>
            <person name="Yuzawa H."/>
            <person name="Kobayashi I."/>
            <person name="Cui L."/>
            <person name="Oguchi A."/>
            <person name="Aoki K."/>
            <person name="Nagai Y."/>
            <person name="Lian J.-Q."/>
            <person name="Ito T."/>
            <person name="Kanamori M."/>
            <person name="Matsumaru H."/>
            <person name="Maruyama A."/>
            <person name="Murakami H."/>
            <person name="Hosoyama A."/>
            <person name="Mizutani-Ui Y."/>
            <person name="Takahashi N.K."/>
            <person name="Sawano T."/>
            <person name="Inoue R."/>
            <person name="Kaito C."/>
            <person name="Sekimizu K."/>
            <person name="Hirakawa H."/>
            <person name="Kuhara S."/>
            <person name="Goto S."/>
            <person name="Yabuzaki J."/>
            <person name="Kanehisa M."/>
            <person name="Yamashita A."/>
            <person name="Oshima K."/>
            <person name="Furuya K."/>
            <person name="Yoshino C."/>
            <person name="Shiba T."/>
            <person name="Hattori M."/>
            <person name="Ogasawara N."/>
            <person name="Hayashi H."/>
            <person name="Hiramatsu K."/>
        </authorList>
    </citation>
    <scope>NUCLEOTIDE SEQUENCE [LARGE SCALE GENOMIC DNA]</scope>
    <source>
        <strain>Mu50 / ATCC 700699</strain>
    </source>
</reference>
<evidence type="ECO:0000255" key="1">
    <source>
        <dbReference type="HAMAP-Rule" id="MF_00335"/>
    </source>
</evidence>
<evidence type="ECO:0000255" key="2">
    <source>
        <dbReference type="PROSITE-ProRule" id="PRU01175"/>
    </source>
</evidence>
<dbReference type="EC" id="3.1.-.-" evidence="1"/>
<dbReference type="EMBL" id="BA000017">
    <property type="protein sequence ID" value="BAB57448.1"/>
    <property type="molecule type" value="Genomic_DNA"/>
</dbReference>
<dbReference type="RefSeq" id="WP_001050913.1">
    <property type="nucleotide sequence ID" value="NC_002758.2"/>
</dbReference>
<dbReference type="SMR" id="P67277"/>
<dbReference type="KEGG" id="sav:SAV1286"/>
<dbReference type="HOGENOM" id="CLU_028328_1_0_9"/>
<dbReference type="PhylomeDB" id="P67277"/>
<dbReference type="Proteomes" id="UP000002481">
    <property type="component" value="Chromosome"/>
</dbReference>
<dbReference type="GO" id="GO:0005886">
    <property type="term" value="C:plasma membrane"/>
    <property type="evidence" value="ECO:0007669"/>
    <property type="project" value="UniProtKB-SubCell"/>
</dbReference>
<dbReference type="GO" id="GO:0003723">
    <property type="term" value="F:RNA binding"/>
    <property type="evidence" value="ECO:0007669"/>
    <property type="project" value="UniProtKB-UniRule"/>
</dbReference>
<dbReference type="GO" id="GO:0004521">
    <property type="term" value="F:RNA endonuclease activity"/>
    <property type="evidence" value="ECO:0007669"/>
    <property type="project" value="UniProtKB-UniRule"/>
</dbReference>
<dbReference type="GO" id="GO:0006402">
    <property type="term" value="P:mRNA catabolic process"/>
    <property type="evidence" value="ECO:0007669"/>
    <property type="project" value="UniProtKB-UniRule"/>
</dbReference>
<dbReference type="CDD" id="cd00077">
    <property type="entry name" value="HDc"/>
    <property type="match status" value="1"/>
</dbReference>
<dbReference type="CDD" id="cd22431">
    <property type="entry name" value="KH-I_RNaseY"/>
    <property type="match status" value="1"/>
</dbReference>
<dbReference type="FunFam" id="1.10.3210.10:FF:000003">
    <property type="entry name" value="Ribonuclease Y"/>
    <property type="match status" value="1"/>
</dbReference>
<dbReference type="FunFam" id="3.30.1370.10:FF:000006">
    <property type="entry name" value="Ribonuclease Y"/>
    <property type="match status" value="1"/>
</dbReference>
<dbReference type="Gene3D" id="1.10.3210.10">
    <property type="entry name" value="Hypothetical protein af1432"/>
    <property type="match status" value="1"/>
</dbReference>
<dbReference type="Gene3D" id="3.30.1370.10">
    <property type="entry name" value="K Homology domain, type 1"/>
    <property type="match status" value="1"/>
</dbReference>
<dbReference type="HAMAP" id="MF_00335">
    <property type="entry name" value="RNase_Y"/>
    <property type="match status" value="1"/>
</dbReference>
<dbReference type="InterPro" id="IPR003607">
    <property type="entry name" value="HD/PDEase_dom"/>
</dbReference>
<dbReference type="InterPro" id="IPR006674">
    <property type="entry name" value="HD_domain"/>
</dbReference>
<dbReference type="InterPro" id="IPR006675">
    <property type="entry name" value="HDIG_dom"/>
</dbReference>
<dbReference type="InterPro" id="IPR004087">
    <property type="entry name" value="KH_dom"/>
</dbReference>
<dbReference type="InterPro" id="IPR004088">
    <property type="entry name" value="KH_dom_type_1"/>
</dbReference>
<dbReference type="InterPro" id="IPR036612">
    <property type="entry name" value="KH_dom_type_1_sf"/>
</dbReference>
<dbReference type="InterPro" id="IPR017705">
    <property type="entry name" value="Ribonuclease_Y"/>
</dbReference>
<dbReference type="InterPro" id="IPR022711">
    <property type="entry name" value="RNase_Y_N"/>
</dbReference>
<dbReference type="NCBIfam" id="TIGR00277">
    <property type="entry name" value="HDIG"/>
    <property type="match status" value="1"/>
</dbReference>
<dbReference type="NCBIfam" id="TIGR03319">
    <property type="entry name" value="RNase_Y"/>
    <property type="match status" value="1"/>
</dbReference>
<dbReference type="PANTHER" id="PTHR12826">
    <property type="entry name" value="RIBONUCLEASE Y"/>
    <property type="match status" value="1"/>
</dbReference>
<dbReference type="PANTHER" id="PTHR12826:SF15">
    <property type="entry name" value="RIBONUCLEASE Y"/>
    <property type="match status" value="1"/>
</dbReference>
<dbReference type="Pfam" id="PF01966">
    <property type="entry name" value="HD"/>
    <property type="match status" value="1"/>
</dbReference>
<dbReference type="Pfam" id="PF00013">
    <property type="entry name" value="KH_1"/>
    <property type="match status" value="1"/>
</dbReference>
<dbReference type="Pfam" id="PF12072">
    <property type="entry name" value="RNase_Y_N"/>
    <property type="match status" value="1"/>
</dbReference>
<dbReference type="SMART" id="SM00471">
    <property type="entry name" value="HDc"/>
    <property type="match status" value="1"/>
</dbReference>
<dbReference type="SMART" id="SM00322">
    <property type="entry name" value="KH"/>
    <property type="match status" value="1"/>
</dbReference>
<dbReference type="SUPFAM" id="SSF54791">
    <property type="entry name" value="Eukaryotic type KH-domain (KH-domain type I)"/>
    <property type="match status" value="1"/>
</dbReference>
<dbReference type="SUPFAM" id="SSF109604">
    <property type="entry name" value="HD-domain/PDEase-like"/>
    <property type="match status" value="1"/>
</dbReference>
<dbReference type="PROSITE" id="PS51831">
    <property type="entry name" value="HD"/>
    <property type="match status" value="1"/>
</dbReference>
<dbReference type="PROSITE" id="PS50084">
    <property type="entry name" value="KH_TYPE_1"/>
    <property type="match status" value="1"/>
</dbReference>
<accession>P67277</accession>
<accession>Q99UI7</accession>
<gene>
    <name evidence="1" type="primary">rny</name>
    <name type="synonym">cvfA</name>
    <name type="ordered locus">SAV1286</name>
</gene>
<protein>
    <recommendedName>
        <fullName evidence="1">Ribonuclease Y</fullName>
        <shortName evidence="1">RNase Y</shortName>
        <ecNumber evidence="1">3.1.-.-</ecNumber>
    </recommendedName>
    <alternativeName>
        <fullName>Conserved virulence factor A</fullName>
    </alternativeName>
</protein>
<keyword id="KW-1003">Cell membrane</keyword>
<keyword id="KW-0255">Endonuclease</keyword>
<keyword id="KW-0378">Hydrolase</keyword>
<keyword id="KW-0472">Membrane</keyword>
<keyword id="KW-0540">Nuclease</keyword>
<keyword id="KW-0694">RNA-binding</keyword>
<keyword id="KW-0812">Transmembrane</keyword>
<keyword id="KW-1133">Transmembrane helix</keyword>
<keyword id="KW-0843">Virulence</keyword>
<name>RNY_STAAM</name>
<sequence length="519" mass="58512">MNLLSLLLILLGIILGVVGGYVVARNLLLQKQSQARQTAEDIVNQAHKEADNIKKEKLLEAKEENQILREQTEAELRERRSELQRQETRLLQKEENLERKSDLLDKKDEILEQKESKIEEKQQQVDAKESSVQTLIMKHEQELERISGLTQEEAINEQLQRVEEELSQDIAVLVKEKEKEAKEKVDKTAKELLATAVQRLAADHTSESTVSVVNLPNDEMKGRIIGREGRNIRTLETLTGIDLIIDDTPEAVILSGFDPIRREIARTALVNLVSDGRIHPGRIEDMVEKARKEVDDIIREAGEQATFEVNAHNMHPDLVKIVGRLNYRTSYGQNVLKHSIEVAHLASMLAAELGEDETLAKRAGLLHDVGKAIDHEVEGSHVEIGVELAKKYGENETVINAIHSHHGDVEPTSIISILVAAADALSAARPGARKETLENYIRRLERLETLSESYDGVEKAFAIQAGREIRVIVSPEEIDDLKSYRLARDIKNQIEDELQYPGHIKVTVVRETRAVEYAK</sequence>
<comment type="function">
    <text evidence="1">Endoribonuclease that initiates mRNA decay.</text>
</comment>
<comment type="subcellular location">
    <subcellularLocation>
        <location evidence="1">Cell membrane</location>
        <topology evidence="1">Single-pass membrane protein</topology>
    </subcellularLocation>
</comment>
<comment type="similarity">
    <text evidence="1">Belongs to the RNase Y family.</text>
</comment>
<feature type="chain" id="PRO_0000163787" description="Ribonuclease Y">
    <location>
        <begin position="1"/>
        <end position="519"/>
    </location>
</feature>
<feature type="transmembrane region" description="Helical" evidence="1">
    <location>
        <begin position="3"/>
        <end position="23"/>
    </location>
</feature>
<feature type="domain" description="KH" evidence="1">
    <location>
        <begin position="209"/>
        <end position="269"/>
    </location>
</feature>
<feature type="domain" description="HD" evidence="2">
    <location>
        <begin position="335"/>
        <end position="428"/>
    </location>
</feature>